<proteinExistence type="predicted"/>
<protein>
    <recommendedName>
        <fullName>Uncharacterized protein UU167</fullName>
    </recommendedName>
</protein>
<gene>
    <name type="ordered locus">UU167</name>
</gene>
<sequence length="119" mass="14280">MKVELYTNDWIDFFKNIAIAWFKTKRYGNKRLSSIEQKQVNKLIRQEFDQYVEFKIISNLIKDYNDNMEKVISLYGANLMPLNLAVQKLYPELTPTEQDELVKELEHKQKLENGEFENE</sequence>
<reference key="1">
    <citation type="journal article" date="2000" name="Nature">
        <title>The complete sequence of the mucosal pathogen Ureaplasma urealyticum.</title>
        <authorList>
            <person name="Glass J.I."/>
            <person name="Lefkowitz E.J."/>
            <person name="Glass J.S."/>
            <person name="Heiner C.R."/>
            <person name="Chen E.Y."/>
            <person name="Cassell G.H."/>
        </authorList>
    </citation>
    <scope>NUCLEOTIDE SEQUENCE [LARGE SCALE GENOMIC DNA]</scope>
    <source>
        <strain>ATCC 700970</strain>
    </source>
</reference>
<name>Y167_UREPA</name>
<keyword id="KW-1185">Reference proteome</keyword>
<accession>Q9PQX6</accession>
<feature type="chain" id="PRO_0000220825" description="Uncharacterized protein UU167">
    <location>
        <begin position="1"/>
        <end position="119"/>
    </location>
</feature>
<dbReference type="EMBL" id="AF222894">
    <property type="protein sequence ID" value="AAF30574.1"/>
    <property type="molecule type" value="Genomic_DNA"/>
</dbReference>
<dbReference type="RefSeq" id="WP_010891698.1">
    <property type="nucleotide sequence ID" value="NC_002162.1"/>
</dbReference>
<dbReference type="SMR" id="Q9PQX6"/>
<dbReference type="STRING" id="273119.UU167"/>
<dbReference type="EnsemblBacteria" id="AAF30574">
    <property type="protein sequence ID" value="AAF30574"/>
    <property type="gene ID" value="UU167"/>
</dbReference>
<dbReference type="KEGG" id="uur:UU167"/>
<dbReference type="HOGENOM" id="CLU_2060446_0_0_14"/>
<dbReference type="Proteomes" id="UP000000423">
    <property type="component" value="Chromosome"/>
</dbReference>
<organism>
    <name type="scientific">Ureaplasma parvum serovar 3 (strain ATCC 700970)</name>
    <dbReference type="NCBI Taxonomy" id="273119"/>
    <lineage>
        <taxon>Bacteria</taxon>
        <taxon>Bacillati</taxon>
        <taxon>Mycoplasmatota</taxon>
        <taxon>Mycoplasmoidales</taxon>
        <taxon>Mycoplasmoidaceae</taxon>
        <taxon>Ureaplasma</taxon>
    </lineage>
</organism>